<dbReference type="EC" id="2.7.4.6" evidence="1"/>
<dbReference type="EMBL" id="CP000254">
    <property type="protein sequence ID" value="ABD41335.1"/>
    <property type="molecule type" value="Genomic_DNA"/>
</dbReference>
<dbReference type="RefSeq" id="WP_011448600.1">
    <property type="nucleotide sequence ID" value="NC_007796.1"/>
</dbReference>
<dbReference type="SMR" id="Q2FRE6"/>
<dbReference type="FunCoup" id="Q2FRE6">
    <property type="interactions" value="251"/>
</dbReference>
<dbReference type="STRING" id="323259.Mhun_1604"/>
<dbReference type="EnsemblBacteria" id="ABD41335">
    <property type="protein sequence ID" value="ABD41335"/>
    <property type="gene ID" value="Mhun_1604"/>
</dbReference>
<dbReference type="GeneID" id="3923601"/>
<dbReference type="KEGG" id="mhu:Mhun_1604"/>
<dbReference type="eggNOG" id="arCOG04313">
    <property type="taxonomic scope" value="Archaea"/>
</dbReference>
<dbReference type="HOGENOM" id="CLU_060216_6_3_2"/>
<dbReference type="InParanoid" id="Q2FRE6"/>
<dbReference type="OrthoDB" id="6874at2157"/>
<dbReference type="Proteomes" id="UP000001941">
    <property type="component" value="Chromosome"/>
</dbReference>
<dbReference type="GO" id="GO:0005737">
    <property type="term" value="C:cytoplasm"/>
    <property type="evidence" value="ECO:0007669"/>
    <property type="project" value="UniProtKB-SubCell"/>
</dbReference>
<dbReference type="GO" id="GO:0005524">
    <property type="term" value="F:ATP binding"/>
    <property type="evidence" value="ECO:0007669"/>
    <property type="project" value="UniProtKB-UniRule"/>
</dbReference>
<dbReference type="GO" id="GO:0046872">
    <property type="term" value="F:metal ion binding"/>
    <property type="evidence" value="ECO:0007669"/>
    <property type="project" value="UniProtKB-KW"/>
</dbReference>
<dbReference type="GO" id="GO:0004550">
    <property type="term" value="F:nucleoside diphosphate kinase activity"/>
    <property type="evidence" value="ECO:0007669"/>
    <property type="project" value="UniProtKB-UniRule"/>
</dbReference>
<dbReference type="GO" id="GO:0006241">
    <property type="term" value="P:CTP biosynthetic process"/>
    <property type="evidence" value="ECO:0007669"/>
    <property type="project" value="UniProtKB-UniRule"/>
</dbReference>
<dbReference type="GO" id="GO:0006183">
    <property type="term" value="P:GTP biosynthetic process"/>
    <property type="evidence" value="ECO:0007669"/>
    <property type="project" value="UniProtKB-UniRule"/>
</dbReference>
<dbReference type="GO" id="GO:0006228">
    <property type="term" value="P:UTP biosynthetic process"/>
    <property type="evidence" value="ECO:0007669"/>
    <property type="project" value="UniProtKB-UniRule"/>
</dbReference>
<dbReference type="CDD" id="cd04413">
    <property type="entry name" value="NDPk_I"/>
    <property type="match status" value="1"/>
</dbReference>
<dbReference type="FunFam" id="3.30.70.141:FF:000002">
    <property type="entry name" value="Nucleoside diphosphate kinase"/>
    <property type="match status" value="1"/>
</dbReference>
<dbReference type="Gene3D" id="3.30.70.141">
    <property type="entry name" value="Nucleoside diphosphate kinase-like domain"/>
    <property type="match status" value="1"/>
</dbReference>
<dbReference type="HAMAP" id="MF_00451">
    <property type="entry name" value="NDP_kinase"/>
    <property type="match status" value="1"/>
</dbReference>
<dbReference type="InterPro" id="IPR034907">
    <property type="entry name" value="NDK-like_dom"/>
</dbReference>
<dbReference type="InterPro" id="IPR036850">
    <property type="entry name" value="NDK-like_dom_sf"/>
</dbReference>
<dbReference type="InterPro" id="IPR001564">
    <property type="entry name" value="Nucleoside_diP_kinase"/>
</dbReference>
<dbReference type="InterPro" id="IPR023005">
    <property type="entry name" value="Nucleoside_diP_kinase_AS"/>
</dbReference>
<dbReference type="NCBIfam" id="NF001908">
    <property type="entry name" value="PRK00668.1"/>
    <property type="match status" value="1"/>
</dbReference>
<dbReference type="PANTHER" id="PTHR11349">
    <property type="entry name" value="NUCLEOSIDE DIPHOSPHATE KINASE"/>
    <property type="match status" value="1"/>
</dbReference>
<dbReference type="Pfam" id="PF00334">
    <property type="entry name" value="NDK"/>
    <property type="match status" value="1"/>
</dbReference>
<dbReference type="PRINTS" id="PR01243">
    <property type="entry name" value="NUCDPKINASE"/>
</dbReference>
<dbReference type="SMART" id="SM00562">
    <property type="entry name" value="NDK"/>
    <property type="match status" value="1"/>
</dbReference>
<dbReference type="SUPFAM" id="SSF54919">
    <property type="entry name" value="Nucleoside diphosphate kinase, NDK"/>
    <property type="match status" value="1"/>
</dbReference>
<dbReference type="PROSITE" id="PS00469">
    <property type="entry name" value="NDPK"/>
    <property type="match status" value="1"/>
</dbReference>
<dbReference type="PROSITE" id="PS51374">
    <property type="entry name" value="NDPK_LIKE"/>
    <property type="match status" value="1"/>
</dbReference>
<feature type="chain" id="PRO_0000242526" description="Nucleoside diphosphate kinase">
    <location>
        <begin position="1"/>
        <end position="149"/>
    </location>
</feature>
<feature type="active site" description="Pros-phosphohistidine intermediate" evidence="1">
    <location>
        <position position="115"/>
    </location>
</feature>
<feature type="binding site" evidence="1">
    <location>
        <position position="9"/>
    </location>
    <ligand>
        <name>ATP</name>
        <dbReference type="ChEBI" id="CHEBI:30616"/>
    </ligand>
</feature>
<feature type="binding site" evidence="1">
    <location>
        <position position="57"/>
    </location>
    <ligand>
        <name>ATP</name>
        <dbReference type="ChEBI" id="CHEBI:30616"/>
    </ligand>
</feature>
<feature type="binding site" evidence="1">
    <location>
        <position position="85"/>
    </location>
    <ligand>
        <name>ATP</name>
        <dbReference type="ChEBI" id="CHEBI:30616"/>
    </ligand>
</feature>
<feature type="binding site" evidence="1">
    <location>
        <position position="91"/>
    </location>
    <ligand>
        <name>ATP</name>
        <dbReference type="ChEBI" id="CHEBI:30616"/>
    </ligand>
</feature>
<feature type="binding site" evidence="1">
    <location>
        <position position="102"/>
    </location>
    <ligand>
        <name>ATP</name>
        <dbReference type="ChEBI" id="CHEBI:30616"/>
    </ligand>
</feature>
<feature type="binding site" evidence="1">
    <location>
        <position position="112"/>
    </location>
    <ligand>
        <name>ATP</name>
        <dbReference type="ChEBI" id="CHEBI:30616"/>
    </ligand>
</feature>
<protein>
    <recommendedName>
        <fullName evidence="1">Nucleoside diphosphate kinase</fullName>
        <shortName evidence="1">NDK</shortName>
        <shortName evidence="1">NDP kinase</shortName>
        <ecNumber evidence="1">2.7.4.6</ecNumber>
    </recommendedName>
    <alternativeName>
        <fullName evidence="1">Nucleoside-2-P kinase</fullName>
    </alternativeName>
</protein>
<evidence type="ECO:0000255" key="1">
    <source>
        <dbReference type="HAMAP-Rule" id="MF_00451"/>
    </source>
</evidence>
<comment type="function">
    <text evidence="1">Major role in the synthesis of nucleoside triphosphates other than ATP. The ATP gamma phosphate is transferred to the NDP beta phosphate via a ping-pong mechanism, using a phosphorylated active-site intermediate.</text>
</comment>
<comment type="catalytic activity">
    <reaction evidence="1">
        <text>a 2'-deoxyribonucleoside 5'-diphosphate + ATP = a 2'-deoxyribonucleoside 5'-triphosphate + ADP</text>
        <dbReference type="Rhea" id="RHEA:44640"/>
        <dbReference type="ChEBI" id="CHEBI:30616"/>
        <dbReference type="ChEBI" id="CHEBI:61560"/>
        <dbReference type="ChEBI" id="CHEBI:73316"/>
        <dbReference type="ChEBI" id="CHEBI:456216"/>
        <dbReference type="EC" id="2.7.4.6"/>
    </reaction>
</comment>
<comment type="catalytic activity">
    <reaction evidence="1">
        <text>a ribonucleoside 5'-diphosphate + ATP = a ribonucleoside 5'-triphosphate + ADP</text>
        <dbReference type="Rhea" id="RHEA:18113"/>
        <dbReference type="ChEBI" id="CHEBI:30616"/>
        <dbReference type="ChEBI" id="CHEBI:57930"/>
        <dbReference type="ChEBI" id="CHEBI:61557"/>
        <dbReference type="ChEBI" id="CHEBI:456216"/>
        <dbReference type="EC" id="2.7.4.6"/>
    </reaction>
</comment>
<comment type="cofactor">
    <cofactor evidence="1">
        <name>Mg(2+)</name>
        <dbReference type="ChEBI" id="CHEBI:18420"/>
    </cofactor>
</comment>
<comment type="subcellular location">
    <subcellularLocation>
        <location evidence="1">Cytoplasm</location>
    </subcellularLocation>
</comment>
<comment type="similarity">
    <text evidence="1">Belongs to the NDK family.</text>
</comment>
<name>NDK_METHJ</name>
<accession>Q2FRE6</accession>
<organism>
    <name type="scientific">Methanospirillum hungatei JF-1 (strain ATCC 27890 / DSM 864 / NBRC 100397 / JF-1)</name>
    <dbReference type="NCBI Taxonomy" id="323259"/>
    <lineage>
        <taxon>Archaea</taxon>
        <taxon>Methanobacteriati</taxon>
        <taxon>Methanobacteriota</taxon>
        <taxon>Stenosarchaea group</taxon>
        <taxon>Methanomicrobia</taxon>
        <taxon>Methanomicrobiales</taxon>
        <taxon>Methanospirillaceae</taxon>
        <taxon>Methanospirillum</taxon>
    </lineage>
</organism>
<gene>
    <name evidence="1" type="primary">ndk</name>
    <name type="ordered locus">Mhun_1604</name>
</gene>
<keyword id="KW-0067">ATP-binding</keyword>
<keyword id="KW-0963">Cytoplasm</keyword>
<keyword id="KW-0418">Kinase</keyword>
<keyword id="KW-0460">Magnesium</keyword>
<keyword id="KW-0479">Metal-binding</keyword>
<keyword id="KW-0546">Nucleotide metabolism</keyword>
<keyword id="KW-0547">Nucleotide-binding</keyword>
<keyword id="KW-0597">Phosphoprotein</keyword>
<keyword id="KW-1185">Reference proteome</keyword>
<keyword id="KW-0808">Transferase</keyword>
<sequence length="149" mass="16898">MERTFLMVKPDGVQRGLIGEVITRFERRGFKMVASRFEKLPDARVMEHYAEHVQKPFFPGLKAYITSGPCFLMVWEGKDIVKISRDMIGATNPAGAAPGTIRGDYALEIGMNVIHGSDSVETANREIAIHFKPEELVSYTRIDEQYLYE</sequence>
<proteinExistence type="inferred from homology"/>
<reference key="1">
    <citation type="journal article" date="2016" name="Stand. Genomic Sci.">
        <title>Complete genome sequence of Methanospirillum hungatei type strain JF1.</title>
        <authorList>
            <person name="Gunsalus R.P."/>
            <person name="Cook L.E."/>
            <person name="Crable B."/>
            <person name="Rohlin L."/>
            <person name="McDonald E."/>
            <person name="Mouttaki H."/>
            <person name="Sieber J.R."/>
            <person name="Poweleit N."/>
            <person name="Zhou H."/>
            <person name="Lapidus A.L."/>
            <person name="Daligault H.E."/>
            <person name="Land M."/>
            <person name="Gilna P."/>
            <person name="Ivanova N."/>
            <person name="Kyrpides N."/>
            <person name="Culley D.E."/>
            <person name="McInerney M.J."/>
        </authorList>
    </citation>
    <scope>NUCLEOTIDE SEQUENCE [LARGE SCALE GENOMIC DNA]</scope>
    <source>
        <strain>ATCC 27890 / DSM 864 / NBRC 100397 / JF-1</strain>
    </source>
</reference>